<accession>A6QNT8</accession>
<organism>
    <name type="scientific">Bos taurus</name>
    <name type="common">Bovine</name>
    <dbReference type="NCBI Taxonomy" id="9913"/>
    <lineage>
        <taxon>Eukaryota</taxon>
        <taxon>Metazoa</taxon>
        <taxon>Chordata</taxon>
        <taxon>Craniata</taxon>
        <taxon>Vertebrata</taxon>
        <taxon>Euteleostomi</taxon>
        <taxon>Mammalia</taxon>
        <taxon>Eutheria</taxon>
        <taxon>Laurasiatheria</taxon>
        <taxon>Artiodactyla</taxon>
        <taxon>Ruminantia</taxon>
        <taxon>Pecora</taxon>
        <taxon>Bovidae</taxon>
        <taxon>Bovinae</taxon>
        <taxon>Bos</taxon>
    </lineage>
</organism>
<name>SC24A_BOVIN</name>
<evidence type="ECO:0000250" key="1">
    <source>
        <dbReference type="UniProtKB" id="O95486"/>
    </source>
</evidence>
<evidence type="ECO:0000255" key="2"/>
<evidence type="ECO:0000256" key="3">
    <source>
        <dbReference type="SAM" id="MobiDB-lite"/>
    </source>
</evidence>
<evidence type="ECO:0000305" key="4"/>
<keyword id="KW-0963">Cytoplasm</keyword>
<keyword id="KW-0968">Cytoplasmic vesicle</keyword>
<keyword id="KW-0256">Endoplasmic reticulum</keyword>
<keyword id="KW-0931">ER-Golgi transport</keyword>
<keyword id="KW-0472">Membrane</keyword>
<keyword id="KW-0479">Metal-binding</keyword>
<keyword id="KW-0653">Protein transport</keyword>
<keyword id="KW-1185">Reference proteome</keyword>
<keyword id="KW-0813">Transport</keyword>
<keyword id="KW-0862">Zinc</keyword>
<reference key="1">
    <citation type="submission" date="2007-07" db="EMBL/GenBank/DDBJ databases">
        <authorList>
            <consortium name="NIH - Mammalian Gene Collection (MGC) project"/>
        </authorList>
    </citation>
    <scope>NUCLEOTIDE SEQUENCE [LARGE SCALE MRNA]</scope>
    <source>
        <strain>Hereford</strain>
        <tissue>Fetal skin</tissue>
    </source>
</reference>
<comment type="function">
    <text evidence="1">Component of the coat protein complex II (COPII) which promotes the formation of transport vesicles from the endoplasmic reticulum (ER). The coat has two main functions, the physical deformation of the endoplasmic reticulum membrane into vesicles and the selection of cargo molecules for their transport to the Golgi complex. Plays a central role in cargo selection within the COPII complex and together with SEC24B may have a different specificity compared to SEC24C and SEC24D. May package preferentially cargos with cytoplasmic DxE or LxxLE motifs and may also recognize conformational epitopes.</text>
</comment>
<comment type="subunit">
    <text evidence="1">COPII is composed of at least five proteins: the Sec23/24 complex, the Sec13/31 complex and Sar1. Interacts with TMED2. Interacts (as part of the Sec23/24 complex) with SEC22B; recruits SEC22B into COPII-coated vesicles for its transport from the endoplasmic reticulum to the Golgi (By similarity). Interacts with STING1; promoting STING1 translocation to COPII vesicles in a STEEP1-dependent manner (By similarity). Interacts with TMEM39A (By similarity). Interacts with SACM1L; this interaction is reduced in the absence of TMEM39A (By similarity). Interacts with kinase FAM20C; transport of FAM20C from the endoplasmic reticulum to the Golgi is likely to be mediated by COPII vesicles (By similarity).</text>
</comment>
<comment type="subcellular location">
    <subcellularLocation>
        <location evidence="1">Cytoplasmic vesicle</location>
        <location evidence="1">COPII-coated vesicle membrane</location>
        <topology evidence="1">Peripheral membrane protein</topology>
        <orientation evidence="1">Cytoplasmic side</orientation>
    </subcellularLocation>
    <subcellularLocation>
        <location evidence="1">Endoplasmic reticulum membrane</location>
        <topology evidence="1">Peripheral membrane protein</topology>
        <orientation evidence="1">Cytoplasmic side</orientation>
    </subcellularLocation>
    <subcellularLocation>
        <location evidence="1">Cytoplasm</location>
        <location evidence="1">Cytosol</location>
    </subcellularLocation>
</comment>
<comment type="similarity">
    <text evidence="4">Belongs to the SEC23/SEC24 family. SEC24 subfamily.</text>
</comment>
<sequence>MSQPGIPASGGSSTGLQAQNGAASASGSPYTNGPVQNALMSSQVSVSQGYNSQLPGSYPHLIPAKTLNPVSGQSNSGGSQTVSPLSNYQGPGQALYGPPVASHPVTPSLHSGPSPQMPLPTSQNPAATPMPSGSFLPGASVSSPSNWQYNYLSQTNHCPRASSQPTMTGNTNLMSPQYVSSGDSSLQNNIIKSGSALPLVNPPLPTTFQPGAPLGPPPTGGPPPVRALTPQKLTPRTMPQPSFNSTSNQEGIISNTNNGSMVVHNNYDEIEGGGFLATSQPTTKNPTMSRSVGYSYPSLPPGYQNTAPPSTTGAGLPPSSLNYPSGPQAFTQTPLGANHLTSSMSGLSLHPEGLRVINLLQERNMLPSTPLQPPVPNLHEDIQKLNCNPELFRCTLTSIPQTQALLNKAKLPLGLLLHPFKDLVQLPVVTSSTIVRCRSCRTYINPFVSFLDQRRWKCNLCYRVNDVPEEFMYNPLTRVYGEPHRRPEVQNATIEFMAPSEYMLRPPQPPVYLFVFDVSHNAIETGYLNSVCQSLLDNLDLLPGNTRTKIGFITFDSTIHFYSLQEGLSQPQMLIVSDIEDVFIPMPENLLVNLNESKELVQDLLKTLPQMFTKTLETQSALGPALQAAFKLMSPTGGRMSVFQTQLPTLGVGALKPREEPNQRSSAKEIHLTPSTDFYKKLALDCSGQQVAVDLFLLSGQYSDLASLGCISRYSAGSVYYYPSYHHQHNPIQVQKLEKELQRYLTRKIGFEAVMRIRCTKGLSIHTFHGNFFVRSTDLLSLPNVNPDAGYAVQMSVEESLTDTQLVSFQSALLYTSSKGERRIRVHTLCLPVVSTLNEVFLGADVQAISGLLANMAVDRSVTASLSDARDALVNAVIDSLSAYRSSALSNQQPGLMVPFSLRLFPLFVLALLKQKSFQTGTNARLDERIFAMCQVKNQPLVYLMLTTHPSLYRVDNLSDEGAISINDRTIPQPPILQLSVEKLSRDGAFLMDAGSVLMLWVGRNCGQNFLSQVLGVENYALIPQTMTDLPELDTPESARTIAFISWLREQRPFYPILYVIRDESPMKANFLQNMVEDRTESALSYYEFLLHIQQQVNK</sequence>
<gene>
    <name evidence="1" type="primary">SEC24A</name>
</gene>
<dbReference type="EMBL" id="BC148994">
    <property type="protein sequence ID" value="AAI48995.1"/>
    <property type="molecule type" value="mRNA"/>
</dbReference>
<dbReference type="RefSeq" id="NP_001095319.1">
    <property type="nucleotide sequence ID" value="NM_001101849.1"/>
</dbReference>
<dbReference type="SMR" id="A6QNT8"/>
<dbReference type="FunCoup" id="A6QNT8">
    <property type="interactions" value="3218"/>
</dbReference>
<dbReference type="STRING" id="9913.ENSBTAP00000040703"/>
<dbReference type="PaxDb" id="9913-ENSBTAP00000040703"/>
<dbReference type="Ensembl" id="ENSBTAT00000043111.3">
    <property type="protein sequence ID" value="ENSBTAP00000040703.2"/>
    <property type="gene ID" value="ENSBTAG00000018322.6"/>
</dbReference>
<dbReference type="GeneID" id="505089"/>
<dbReference type="KEGG" id="bta:505089"/>
<dbReference type="CTD" id="10802"/>
<dbReference type="VEuPathDB" id="HostDB:ENSBTAG00000018322"/>
<dbReference type="VGNC" id="VGNC:34413">
    <property type="gene designation" value="SEC24A"/>
</dbReference>
<dbReference type="eggNOG" id="KOG1985">
    <property type="taxonomic scope" value="Eukaryota"/>
</dbReference>
<dbReference type="GeneTree" id="ENSGT00950000182924"/>
<dbReference type="HOGENOM" id="CLU_004589_2_0_1"/>
<dbReference type="InParanoid" id="A6QNT8"/>
<dbReference type="OMA" id="AVECSKQ"/>
<dbReference type="OrthoDB" id="49016at2759"/>
<dbReference type="TreeFam" id="TF350406"/>
<dbReference type="Reactome" id="R-BTA-204005">
    <property type="pathway name" value="COPII-mediated vesicle transport"/>
</dbReference>
<dbReference type="Reactome" id="R-BTA-2132295">
    <property type="pathway name" value="MHC class II antigen presentation"/>
</dbReference>
<dbReference type="Reactome" id="R-BTA-5694530">
    <property type="pathway name" value="Cargo concentration in the ER"/>
</dbReference>
<dbReference type="Reactome" id="R-BTA-983170">
    <property type="pathway name" value="Antigen Presentation: Folding, assembly and peptide loading of class I MHC"/>
</dbReference>
<dbReference type="Proteomes" id="UP000009136">
    <property type="component" value="Chromosome 7"/>
</dbReference>
<dbReference type="Bgee" id="ENSBTAG00000018322">
    <property type="expression patterns" value="Expressed in spiral colon and 110 other cell types or tissues"/>
</dbReference>
<dbReference type="GO" id="GO:0030127">
    <property type="term" value="C:COPII vesicle coat"/>
    <property type="evidence" value="ECO:0000250"/>
    <property type="project" value="UniProtKB"/>
</dbReference>
<dbReference type="GO" id="GO:0005829">
    <property type="term" value="C:cytosol"/>
    <property type="evidence" value="ECO:0007669"/>
    <property type="project" value="UniProtKB-SubCell"/>
</dbReference>
<dbReference type="GO" id="GO:0070971">
    <property type="term" value="C:endoplasmic reticulum exit site"/>
    <property type="evidence" value="ECO:0000318"/>
    <property type="project" value="GO_Central"/>
</dbReference>
<dbReference type="GO" id="GO:0005789">
    <property type="term" value="C:endoplasmic reticulum membrane"/>
    <property type="evidence" value="ECO:0007669"/>
    <property type="project" value="UniProtKB-SubCell"/>
</dbReference>
<dbReference type="GO" id="GO:0000149">
    <property type="term" value="F:SNARE binding"/>
    <property type="evidence" value="ECO:0000318"/>
    <property type="project" value="GO_Central"/>
</dbReference>
<dbReference type="GO" id="GO:0008270">
    <property type="term" value="F:zinc ion binding"/>
    <property type="evidence" value="ECO:0000318"/>
    <property type="project" value="GO_Central"/>
</dbReference>
<dbReference type="GO" id="GO:0090110">
    <property type="term" value="P:COPII-coated vesicle cargo loading"/>
    <property type="evidence" value="ECO:0000250"/>
    <property type="project" value="UniProtKB"/>
</dbReference>
<dbReference type="GO" id="GO:0006888">
    <property type="term" value="P:endoplasmic reticulum to Golgi vesicle-mediated transport"/>
    <property type="evidence" value="ECO:0000250"/>
    <property type="project" value="UniProtKB"/>
</dbReference>
<dbReference type="GO" id="GO:0006886">
    <property type="term" value="P:intracellular protein transport"/>
    <property type="evidence" value="ECO:0007669"/>
    <property type="project" value="InterPro"/>
</dbReference>
<dbReference type="CDD" id="cd01479">
    <property type="entry name" value="Sec24-like"/>
    <property type="match status" value="1"/>
</dbReference>
<dbReference type="FunFam" id="2.30.30.380:FF:000004">
    <property type="entry name" value="SEC24 homolog B, COPII coat complex component"/>
    <property type="match status" value="1"/>
</dbReference>
<dbReference type="FunFam" id="3.40.20.10:FF:000029">
    <property type="entry name" value="SEC24 homolog B, COPII coat complex component"/>
    <property type="match status" value="1"/>
</dbReference>
<dbReference type="FunFam" id="3.40.50.410:FF:000019">
    <property type="entry name" value="SEC24 homolog B, COPII coat complex component"/>
    <property type="match status" value="1"/>
</dbReference>
<dbReference type="Gene3D" id="2.60.40.1670">
    <property type="entry name" value="beta-sandwich domain of Sec23/24"/>
    <property type="match status" value="1"/>
</dbReference>
<dbReference type="Gene3D" id="1.20.120.730">
    <property type="entry name" value="Sec23/Sec24 helical domain"/>
    <property type="match status" value="1"/>
</dbReference>
<dbReference type="Gene3D" id="3.40.20.10">
    <property type="entry name" value="Severin"/>
    <property type="match status" value="1"/>
</dbReference>
<dbReference type="Gene3D" id="3.40.50.410">
    <property type="entry name" value="von Willebrand factor, type A domain"/>
    <property type="match status" value="1"/>
</dbReference>
<dbReference type="Gene3D" id="2.30.30.380">
    <property type="entry name" value="Zn-finger domain of Sec23/24"/>
    <property type="match status" value="1"/>
</dbReference>
<dbReference type="InterPro" id="IPR029006">
    <property type="entry name" value="ADF-H/Gelsolin-like_dom_sf"/>
</dbReference>
<dbReference type="InterPro" id="IPR007123">
    <property type="entry name" value="Gelsolin-like_dom"/>
</dbReference>
<dbReference type="InterPro" id="IPR036180">
    <property type="entry name" value="Gelsolin-like_dom_sf"/>
</dbReference>
<dbReference type="InterPro" id="IPR006900">
    <property type="entry name" value="Sec23/24_helical_dom"/>
</dbReference>
<dbReference type="InterPro" id="IPR036175">
    <property type="entry name" value="Sec23/24_helical_dom_sf"/>
</dbReference>
<dbReference type="InterPro" id="IPR006896">
    <property type="entry name" value="Sec23/24_trunk_dom"/>
</dbReference>
<dbReference type="InterPro" id="IPR012990">
    <property type="entry name" value="Sec23_24_beta_S"/>
</dbReference>
<dbReference type="InterPro" id="IPR050550">
    <property type="entry name" value="SEC23_SEC24_subfamily"/>
</dbReference>
<dbReference type="InterPro" id="IPR041742">
    <property type="entry name" value="Sec24-like_trunk_dom"/>
</dbReference>
<dbReference type="InterPro" id="IPR036465">
    <property type="entry name" value="vWFA_dom_sf"/>
</dbReference>
<dbReference type="InterPro" id="IPR006895">
    <property type="entry name" value="Znf_Sec23_Sec24"/>
</dbReference>
<dbReference type="PANTHER" id="PTHR13803:SF1">
    <property type="entry name" value="PROTEIN TRANSPORT PROTEIN SEC24A"/>
    <property type="match status" value="1"/>
</dbReference>
<dbReference type="PANTHER" id="PTHR13803">
    <property type="entry name" value="SEC24-RELATED PROTEIN"/>
    <property type="match status" value="1"/>
</dbReference>
<dbReference type="Pfam" id="PF00626">
    <property type="entry name" value="Gelsolin"/>
    <property type="match status" value="1"/>
</dbReference>
<dbReference type="Pfam" id="PF08033">
    <property type="entry name" value="Sec23_BS"/>
    <property type="match status" value="1"/>
</dbReference>
<dbReference type="Pfam" id="PF04815">
    <property type="entry name" value="Sec23_helical"/>
    <property type="match status" value="1"/>
</dbReference>
<dbReference type="Pfam" id="PF04811">
    <property type="entry name" value="Sec23_trunk"/>
    <property type="match status" value="1"/>
</dbReference>
<dbReference type="Pfam" id="PF04810">
    <property type="entry name" value="zf-Sec23_Sec24"/>
    <property type="match status" value="1"/>
</dbReference>
<dbReference type="SUPFAM" id="SSF81995">
    <property type="entry name" value="beta-sandwich domain of Sec23/24"/>
    <property type="match status" value="2"/>
</dbReference>
<dbReference type="SUPFAM" id="SSF82754">
    <property type="entry name" value="C-terminal, gelsolin-like domain of Sec23/24"/>
    <property type="match status" value="1"/>
</dbReference>
<dbReference type="SUPFAM" id="SSF81811">
    <property type="entry name" value="Helical domain of Sec23/24"/>
    <property type="match status" value="1"/>
</dbReference>
<dbReference type="SUPFAM" id="SSF53300">
    <property type="entry name" value="vWA-like"/>
    <property type="match status" value="1"/>
</dbReference>
<proteinExistence type="evidence at transcript level"/>
<feature type="chain" id="PRO_0000311673" description="Protein transport protein Sec24A">
    <location>
        <begin position="1"/>
        <end position="1099"/>
    </location>
</feature>
<feature type="repeat" description="Gelsolin-like" evidence="2">
    <location>
        <begin position="972"/>
        <end position="1044"/>
    </location>
</feature>
<feature type="region of interest" description="Disordered" evidence="3">
    <location>
        <begin position="1"/>
        <end position="36"/>
    </location>
</feature>
<feature type="region of interest" description="Disordered" evidence="3">
    <location>
        <begin position="65"/>
        <end position="139"/>
    </location>
</feature>
<feature type="region of interest" description="Disordered" evidence="3">
    <location>
        <begin position="279"/>
        <end position="317"/>
    </location>
</feature>
<feature type="region of interest" description="Zinc finger-like">
    <location>
        <begin position="437"/>
        <end position="461"/>
    </location>
</feature>
<feature type="compositionally biased region" description="Polar residues" evidence="3">
    <location>
        <begin position="10"/>
        <end position="20"/>
    </location>
</feature>
<feature type="compositionally biased region" description="Polar residues" evidence="3">
    <location>
        <begin position="68"/>
        <end position="90"/>
    </location>
</feature>
<feature type="compositionally biased region" description="Polar residues" evidence="3">
    <location>
        <begin position="108"/>
        <end position="126"/>
    </location>
</feature>
<feature type="compositionally biased region" description="Polar residues" evidence="3">
    <location>
        <begin position="279"/>
        <end position="292"/>
    </location>
</feature>
<feature type="compositionally biased region" description="Polar residues" evidence="3">
    <location>
        <begin position="303"/>
        <end position="317"/>
    </location>
</feature>
<feature type="binding site" evidence="1">
    <location>
        <position position="437"/>
    </location>
    <ligand>
        <name>Zn(2+)</name>
        <dbReference type="ChEBI" id="CHEBI:29105"/>
    </ligand>
</feature>
<feature type="binding site" evidence="1">
    <location>
        <position position="440"/>
    </location>
    <ligand>
        <name>Zn(2+)</name>
        <dbReference type="ChEBI" id="CHEBI:29105"/>
    </ligand>
</feature>
<feature type="binding site" evidence="1">
    <location>
        <position position="458"/>
    </location>
    <ligand>
        <name>Zn(2+)</name>
        <dbReference type="ChEBI" id="CHEBI:29105"/>
    </ligand>
</feature>
<feature type="binding site" evidence="1">
    <location>
        <position position="461"/>
    </location>
    <ligand>
        <name>Zn(2+)</name>
        <dbReference type="ChEBI" id="CHEBI:29105"/>
    </ligand>
</feature>
<protein>
    <recommendedName>
        <fullName evidence="4">Protein transport protein Sec24A</fullName>
    </recommendedName>
    <alternativeName>
        <fullName>SEC24-related protein A</fullName>
    </alternativeName>
</protein>